<proteinExistence type="inferred from homology"/>
<accession>Q5RAU6</accession>
<protein>
    <recommendedName>
        <fullName>Protein kish-B</fullName>
    </recommendedName>
    <alternativeName>
        <fullName>Transmembrane protein 167B</fullName>
    </alternativeName>
</protein>
<reference key="1">
    <citation type="submission" date="2004-11" db="EMBL/GenBank/DDBJ databases">
        <authorList>
            <consortium name="The German cDNA consortium"/>
        </authorList>
    </citation>
    <scope>NUCLEOTIDE SEQUENCE [LARGE SCALE MRNA]</scope>
    <source>
        <tissue>Heart</tissue>
    </source>
</reference>
<dbReference type="EMBL" id="CR858916">
    <property type="protein sequence ID" value="CAH91114.1"/>
    <property type="molecule type" value="mRNA"/>
</dbReference>
<dbReference type="RefSeq" id="NP_001125652.1">
    <property type="nucleotide sequence ID" value="NM_001132180.2"/>
</dbReference>
<dbReference type="FunCoup" id="Q5RAU6">
    <property type="interactions" value="1330"/>
</dbReference>
<dbReference type="GeneID" id="100172571"/>
<dbReference type="KEGG" id="pon:100172571"/>
<dbReference type="CTD" id="56900"/>
<dbReference type="InParanoid" id="Q5RAU6"/>
<dbReference type="OrthoDB" id="10034655at2759"/>
<dbReference type="Proteomes" id="UP000001595">
    <property type="component" value="Unplaced"/>
</dbReference>
<dbReference type="GO" id="GO:0000139">
    <property type="term" value="C:Golgi membrane"/>
    <property type="evidence" value="ECO:0007669"/>
    <property type="project" value="UniProtKB-SubCell"/>
</dbReference>
<dbReference type="InterPro" id="IPR042863">
    <property type="entry name" value="Kish-B"/>
</dbReference>
<dbReference type="InterPro" id="IPR009653">
    <property type="entry name" value="Ksh1"/>
</dbReference>
<dbReference type="PANTHER" id="PTHR46815">
    <property type="entry name" value="PROTEIN KISH-B"/>
    <property type="match status" value="1"/>
</dbReference>
<dbReference type="PANTHER" id="PTHR46815:SF1">
    <property type="entry name" value="PROTEIN KISH-B"/>
    <property type="match status" value="1"/>
</dbReference>
<dbReference type="Pfam" id="PF06842">
    <property type="entry name" value="DUF1242"/>
    <property type="match status" value="1"/>
</dbReference>
<keyword id="KW-0333">Golgi apparatus</keyword>
<keyword id="KW-0472">Membrane</keyword>
<keyword id="KW-1185">Reference proteome</keyword>
<keyword id="KW-0732">Signal</keyword>
<keyword id="KW-0812">Transmembrane</keyword>
<keyword id="KW-1133">Transmembrane helix</keyword>
<feature type="signal peptide" evidence="2">
    <location>
        <begin position="1"/>
        <end position="22"/>
    </location>
</feature>
<feature type="chain" id="PRO_0000265083" description="Protein kish-B">
    <location>
        <begin position="23"/>
        <end position="74"/>
    </location>
</feature>
<feature type="topological domain" description="Extracellular" evidence="2">
    <location>
        <begin position="23"/>
        <end position="52"/>
    </location>
</feature>
<feature type="transmembrane region" description="Helical" evidence="2">
    <location>
        <begin position="53"/>
        <end position="73"/>
    </location>
</feature>
<feature type="topological domain" description="Cytoplasmic" evidence="2">
    <location>
        <position position="74"/>
    </location>
</feature>
<gene>
    <name type="primary">TMEM167B</name>
</gene>
<name>KISHB_PONAB</name>
<sequence length="74" mass="8294">MTNVYSLDGILVFGLLFVCTCAYFKKVPRLKTWLLSEKKGVWGVFYKAAVIGTRLHAAVAIACVVMAFYVLFIK</sequence>
<organism>
    <name type="scientific">Pongo abelii</name>
    <name type="common">Sumatran orangutan</name>
    <name type="synonym">Pongo pygmaeus abelii</name>
    <dbReference type="NCBI Taxonomy" id="9601"/>
    <lineage>
        <taxon>Eukaryota</taxon>
        <taxon>Metazoa</taxon>
        <taxon>Chordata</taxon>
        <taxon>Craniata</taxon>
        <taxon>Vertebrata</taxon>
        <taxon>Euteleostomi</taxon>
        <taxon>Mammalia</taxon>
        <taxon>Eutheria</taxon>
        <taxon>Euarchontoglires</taxon>
        <taxon>Primates</taxon>
        <taxon>Haplorrhini</taxon>
        <taxon>Catarrhini</taxon>
        <taxon>Hominidae</taxon>
        <taxon>Pongo</taxon>
    </lineage>
</organism>
<evidence type="ECO:0000250" key="1"/>
<evidence type="ECO:0000255" key="2"/>
<evidence type="ECO:0000305" key="3"/>
<comment type="function">
    <text evidence="1">Involved in the early part of the secretory pathway.</text>
</comment>
<comment type="subcellular location">
    <subcellularLocation>
        <location evidence="1">Golgi apparatus membrane</location>
        <topology evidence="1">Single-pass type I membrane protein</topology>
    </subcellularLocation>
</comment>
<comment type="similarity">
    <text evidence="3">Belongs to the KISH family.</text>
</comment>